<comment type="function">
    <text evidence="1">Catalyzes the transfer of succinyl-CoA to arginine to produce N(2)-succinylarginine.</text>
</comment>
<comment type="catalytic activity">
    <reaction evidence="1">
        <text>succinyl-CoA + L-arginine = N(2)-succinyl-L-arginine + CoA + H(+)</text>
        <dbReference type="Rhea" id="RHEA:15185"/>
        <dbReference type="ChEBI" id="CHEBI:15378"/>
        <dbReference type="ChEBI" id="CHEBI:32682"/>
        <dbReference type="ChEBI" id="CHEBI:57287"/>
        <dbReference type="ChEBI" id="CHEBI:57292"/>
        <dbReference type="ChEBI" id="CHEBI:58241"/>
        <dbReference type="EC" id="2.3.1.109"/>
    </reaction>
</comment>
<comment type="pathway">
    <text evidence="1">Amino-acid degradation; L-arginine degradation via AST pathway; L-glutamate and succinate from L-arginine: step 1/5.</text>
</comment>
<comment type="similarity">
    <text evidence="1">Belongs to the arginine N-succinyltransferase family.</text>
</comment>
<gene>
    <name evidence="1" type="primary">astA</name>
    <name type="ordered locus">YPO1963</name>
    <name type="ordered locus">y2348</name>
    <name type="ordered locus">YP_1708</name>
</gene>
<organism>
    <name type="scientific">Yersinia pestis</name>
    <dbReference type="NCBI Taxonomy" id="632"/>
    <lineage>
        <taxon>Bacteria</taxon>
        <taxon>Pseudomonadati</taxon>
        <taxon>Pseudomonadota</taxon>
        <taxon>Gammaproteobacteria</taxon>
        <taxon>Enterobacterales</taxon>
        <taxon>Yersiniaceae</taxon>
        <taxon>Yersinia</taxon>
    </lineage>
</organism>
<protein>
    <recommendedName>
        <fullName evidence="1">Arginine N-succinyltransferase</fullName>
        <shortName evidence="1">AST</shortName>
        <ecNumber evidence="1">2.3.1.109</ecNumber>
    </recommendedName>
    <alternativeName>
        <fullName evidence="1">AOST</fullName>
    </alternativeName>
</protein>
<evidence type="ECO:0000255" key="1">
    <source>
        <dbReference type="HAMAP-Rule" id="MF_01171"/>
    </source>
</evidence>
<accession>Q9ZC67</accession>
<accession>Q74UK5</accession>
<accession>Q7CI71</accession>
<reference key="1">
    <citation type="submission" date="1998-10" db="EMBL/GenBank/DDBJ databases">
        <title>DNA sequence of the 102 kbases unstable region of Yersinia pestis.</title>
        <authorList>
            <person name="Buchrieser C."/>
            <person name="Rusniok C."/>
            <person name="Couve E."/>
            <person name="Frangeul L."/>
            <person name="Billault A."/>
            <person name="Kunst F."/>
            <person name="Carniel E."/>
            <person name="Glaser P."/>
        </authorList>
    </citation>
    <scope>NUCLEOTIDE SEQUENCE [GENOMIC DNA]</scope>
    <source>
        <strain>6/69</strain>
    </source>
</reference>
<reference key="2">
    <citation type="journal article" date="2001" name="Nature">
        <title>Genome sequence of Yersinia pestis, the causative agent of plague.</title>
        <authorList>
            <person name="Parkhill J."/>
            <person name="Wren B.W."/>
            <person name="Thomson N.R."/>
            <person name="Titball R.W."/>
            <person name="Holden M.T.G."/>
            <person name="Prentice M.B."/>
            <person name="Sebaihia M."/>
            <person name="James K.D."/>
            <person name="Churcher C.M."/>
            <person name="Mungall K.L."/>
            <person name="Baker S."/>
            <person name="Basham D."/>
            <person name="Bentley S.D."/>
            <person name="Brooks K."/>
            <person name="Cerdeno-Tarraga A.-M."/>
            <person name="Chillingworth T."/>
            <person name="Cronin A."/>
            <person name="Davies R.M."/>
            <person name="Davis P."/>
            <person name="Dougan G."/>
            <person name="Feltwell T."/>
            <person name="Hamlin N."/>
            <person name="Holroyd S."/>
            <person name="Jagels K."/>
            <person name="Karlyshev A.V."/>
            <person name="Leather S."/>
            <person name="Moule S."/>
            <person name="Oyston P.C.F."/>
            <person name="Quail M.A."/>
            <person name="Rutherford K.M."/>
            <person name="Simmonds M."/>
            <person name="Skelton J."/>
            <person name="Stevens K."/>
            <person name="Whitehead S."/>
            <person name="Barrell B.G."/>
        </authorList>
    </citation>
    <scope>NUCLEOTIDE SEQUENCE [LARGE SCALE GENOMIC DNA]</scope>
    <source>
        <strain>CO-92 / Biovar Orientalis</strain>
    </source>
</reference>
<reference key="3">
    <citation type="journal article" date="2004" name="DNA Res.">
        <title>Complete genome sequence of Yersinia pestis strain 91001, an isolate avirulent to humans.</title>
        <authorList>
            <person name="Song Y."/>
            <person name="Tong Z."/>
            <person name="Wang J."/>
            <person name="Wang L."/>
            <person name="Guo Z."/>
            <person name="Han Y."/>
            <person name="Zhang J."/>
            <person name="Pei D."/>
            <person name="Zhou D."/>
            <person name="Qin H."/>
            <person name="Pang X."/>
            <person name="Han Y."/>
            <person name="Zhai J."/>
            <person name="Li M."/>
            <person name="Cui B."/>
            <person name="Qi Z."/>
            <person name="Jin L."/>
            <person name="Dai R."/>
            <person name="Chen F."/>
            <person name="Li S."/>
            <person name="Ye C."/>
            <person name="Du Z."/>
            <person name="Lin W."/>
            <person name="Wang J."/>
            <person name="Yu J."/>
            <person name="Yang H."/>
            <person name="Wang J."/>
            <person name="Huang P."/>
            <person name="Yang R."/>
        </authorList>
    </citation>
    <scope>NUCLEOTIDE SEQUENCE [LARGE SCALE GENOMIC DNA]</scope>
    <source>
        <strain>91001 / Biovar Mediaevalis</strain>
    </source>
</reference>
<reference key="4">
    <citation type="journal article" date="2002" name="J. Bacteriol.">
        <title>Genome sequence of Yersinia pestis KIM.</title>
        <authorList>
            <person name="Deng W."/>
            <person name="Burland V."/>
            <person name="Plunkett G. III"/>
            <person name="Boutin A."/>
            <person name="Mayhew G.F."/>
            <person name="Liss P."/>
            <person name="Perna N.T."/>
            <person name="Rose D.J."/>
            <person name="Mau B."/>
            <person name="Zhou S."/>
            <person name="Schwartz D.C."/>
            <person name="Fetherston J.D."/>
            <person name="Lindler L.E."/>
            <person name="Brubaker R.R."/>
            <person name="Plano G.V."/>
            <person name="Straley S.C."/>
            <person name="McDonough K.A."/>
            <person name="Nilles M.L."/>
            <person name="Matson J.S."/>
            <person name="Blattner F.R."/>
            <person name="Perry R.D."/>
        </authorList>
    </citation>
    <scope>NUCLEOTIDE SEQUENCE [LARGE SCALE GENOMIC DNA]</scope>
    <source>
        <strain>KIM10+ / Biovar Mediaevalis</strain>
    </source>
</reference>
<keyword id="KW-0012">Acyltransferase</keyword>
<keyword id="KW-0056">Arginine metabolism</keyword>
<keyword id="KW-1185">Reference proteome</keyword>
<keyword id="KW-0808">Transferase</keyword>
<proteinExistence type="inferred from homology"/>
<dbReference type="EC" id="2.3.1.109" evidence="1"/>
<dbReference type="EMBL" id="AL031866">
    <property type="protein sequence ID" value="CAA21340.1"/>
    <property type="molecule type" value="Genomic_DNA"/>
</dbReference>
<dbReference type="EMBL" id="AL590842">
    <property type="protein sequence ID" value="CAL20601.1"/>
    <property type="molecule type" value="Genomic_DNA"/>
</dbReference>
<dbReference type="EMBL" id="AE017042">
    <property type="protein sequence ID" value="AAS61937.1"/>
    <property type="molecule type" value="Genomic_DNA"/>
</dbReference>
<dbReference type="EMBL" id="AE009952">
    <property type="protein sequence ID" value="AAM85906.1"/>
    <property type="molecule type" value="Genomic_DNA"/>
</dbReference>
<dbReference type="PIR" id="AF0239">
    <property type="entry name" value="AF0239"/>
</dbReference>
<dbReference type="PIR" id="T46997">
    <property type="entry name" value="T46997"/>
</dbReference>
<dbReference type="RefSeq" id="WP_002212031.1">
    <property type="nucleotide sequence ID" value="NZ_WHLN01000038.1"/>
</dbReference>
<dbReference type="RefSeq" id="YP_002346952.1">
    <property type="nucleotide sequence ID" value="NC_003143.1"/>
</dbReference>
<dbReference type="SMR" id="Q9ZC67"/>
<dbReference type="STRING" id="214092.YPO1963"/>
<dbReference type="PaxDb" id="214092-YPO1963"/>
<dbReference type="DNASU" id="1147295"/>
<dbReference type="EnsemblBacteria" id="AAS61937">
    <property type="protein sequence ID" value="AAS61937"/>
    <property type="gene ID" value="YP_1708"/>
</dbReference>
<dbReference type="KEGG" id="ype:YPO1963"/>
<dbReference type="KEGG" id="ypk:y2348"/>
<dbReference type="KEGG" id="ypl:CH46_3151"/>
<dbReference type="KEGG" id="ypm:YP_1708"/>
<dbReference type="KEGG" id="ypv:BZ15_1578"/>
<dbReference type="KEGG" id="ypw:CH59_3761"/>
<dbReference type="PATRIC" id="fig|214092.21.peg.2340"/>
<dbReference type="eggNOG" id="COG3138">
    <property type="taxonomic scope" value="Bacteria"/>
</dbReference>
<dbReference type="HOGENOM" id="CLU_057655_0_0_6"/>
<dbReference type="OMA" id="PEENRSW"/>
<dbReference type="OrthoDB" id="21121at2"/>
<dbReference type="UniPathway" id="UPA00185">
    <property type="reaction ID" value="UER00279"/>
</dbReference>
<dbReference type="Proteomes" id="UP000000815">
    <property type="component" value="Chromosome"/>
</dbReference>
<dbReference type="Proteomes" id="UP000001019">
    <property type="component" value="Chromosome"/>
</dbReference>
<dbReference type="Proteomes" id="UP000002490">
    <property type="component" value="Chromosome"/>
</dbReference>
<dbReference type="GO" id="GO:0008791">
    <property type="term" value="F:arginine N-succinyltransferase activity"/>
    <property type="evidence" value="ECO:0007669"/>
    <property type="project" value="UniProtKB-UniRule"/>
</dbReference>
<dbReference type="GO" id="GO:0009015">
    <property type="term" value="F:N-succinylarginine dihydrolase activity"/>
    <property type="evidence" value="ECO:0000318"/>
    <property type="project" value="GO_Central"/>
</dbReference>
<dbReference type="GO" id="GO:0006527">
    <property type="term" value="P:arginine catabolic process"/>
    <property type="evidence" value="ECO:0000318"/>
    <property type="project" value="GO_Central"/>
</dbReference>
<dbReference type="GO" id="GO:0019544">
    <property type="term" value="P:arginine catabolic process to glutamate"/>
    <property type="evidence" value="ECO:0007669"/>
    <property type="project" value="UniProtKB-UniRule"/>
</dbReference>
<dbReference type="GO" id="GO:0019545">
    <property type="term" value="P:arginine catabolic process to succinate"/>
    <property type="evidence" value="ECO:0007669"/>
    <property type="project" value="UniProtKB-UniRule"/>
</dbReference>
<dbReference type="Gene3D" id="2.40.40.20">
    <property type="match status" value="1"/>
</dbReference>
<dbReference type="HAMAP" id="MF_01171">
    <property type="entry name" value="AstA"/>
    <property type="match status" value="1"/>
</dbReference>
<dbReference type="InterPro" id="IPR016181">
    <property type="entry name" value="Acyl_CoA_acyltransferase"/>
</dbReference>
<dbReference type="InterPro" id="IPR007041">
    <property type="entry name" value="Arg_succinylTrfase_AstA/AruG"/>
</dbReference>
<dbReference type="InterPro" id="IPR017650">
    <property type="entry name" value="Arginine_N-succinylTrfase"/>
</dbReference>
<dbReference type="NCBIfam" id="TIGR03243">
    <property type="entry name" value="arg_catab_AOST"/>
    <property type="match status" value="1"/>
</dbReference>
<dbReference type="NCBIfam" id="TIGR03244">
    <property type="entry name" value="arg_catab_AstA"/>
    <property type="match status" value="1"/>
</dbReference>
<dbReference type="NCBIfam" id="NF007770">
    <property type="entry name" value="PRK10456.1"/>
    <property type="match status" value="1"/>
</dbReference>
<dbReference type="PANTHER" id="PTHR30420:SF1">
    <property type="entry name" value="ARGININE N-SUCCINYLTRANSFERASE"/>
    <property type="match status" value="1"/>
</dbReference>
<dbReference type="PANTHER" id="PTHR30420">
    <property type="entry name" value="N-SUCCINYLARGININE DIHYDROLASE"/>
    <property type="match status" value="1"/>
</dbReference>
<dbReference type="Pfam" id="PF04958">
    <property type="entry name" value="AstA"/>
    <property type="match status" value="1"/>
</dbReference>
<dbReference type="SUPFAM" id="SSF55729">
    <property type="entry name" value="Acyl-CoA N-acyltransferases (Nat)"/>
    <property type="match status" value="1"/>
</dbReference>
<feature type="chain" id="PRO_0000262335" description="Arginine N-succinyltransferase">
    <location>
        <begin position="1"/>
        <end position="350"/>
    </location>
</feature>
<feature type="active site" description="Proton donor" evidence="1">
    <location>
        <position position="229"/>
    </location>
</feature>
<feature type="binding site" evidence="1">
    <location>
        <position position="125"/>
    </location>
    <ligand>
        <name>succinyl-CoA</name>
        <dbReference type="ChEBI" id="CHEBI:57292"/>
    </ligand>
</feature>
<sequence length="350" mass="39468">MMKVRPVERRDLADIFELAGKTGVGMTSLPQNEQHLAARIERALNTWQGSLDPGEQGYLFVLEDSEQQKVVGVSAIEVAVGLNDPWYNFRVGTLVHASKALNVYKSVPTLFLSNDHTGYSELCTLFLDPDYRKDKNGPFLSKVRFLFIAAFRQYFSRKVIAEMRGYTDEQGRSPFWESVGRHFFSIEFAKADYLSGTGQKAFIAELMPKHPLYVDFLAEEARAVIGQVHPHTAPARAVLETEGLQYQGYVDIFDGGPTLEANTDDVRVVRDSSKRTVVIKDYDIEDYDIDPNGRLYLVANDHYHHFRAILMNTHLSDERLRLTPESAEALGVAAGDSVRIVSLFAPETKR</sequence>
<name>ASTA_YERPE</name>